<sequence>MQHPREENSIVVELEPSLATFIKQGFNNLVKWPLLNIGIVLSNTSTAVNEEWLTAVEHIPTMKIFYKHIHKILTREMGFLVYLKRSQSERDNYITLYDFDYYIIDKDTNSVTMVDKPTELKETLLHVFQEYRLKSSQTIELIAFSSGTVINEDIVSKLTFLDVEVFNREYNNVKTIIDPDFVSRSPFIVISPMGKLTFFVEVYSWFDFKSCFKDIIDFLEGALIANIHNHMIKVGDCDETVSSYNPESGMLFVNDLMTMNIVNFFGCNSRLESYHRFDMTKVDVELFIKALSDACKKILSASNRL</sequence>
<accession>Q6RZF4</accession>
<feature type="chain" id="PRO_0000099138" description="DNA-directed RNA polymerase 35 kDa subunit">
    <location>
        <begin position="1"/>
        <end position="305"/>
    </location>
</feature>
<reference key="1">
    <citation type="journal article" date="2005" name="J. Gen. Virol.">
        <title>Complete coding sequences of the rabbitpox virus genome.</title>
        <authorList>
            <person name="Li G."/>
            <person name="Chen N."/>
            <person name="Roper R.L."/>
            <person name="Feng Z."/>
            <person name="Hunter A.L."/>
            <person name="Danila M."/>
            <person name="Lefkowitz E.J."/>
            <person name="Buller R.M.L."/>
            <person name="Upton C."/>
        </authorList>
    </citation>
    <scope>NUCLEOTIDE SEQUENCE [LARGE SCALE GENOMIC DNA]</scope>
</reference>
<protein>
    <recommendedName>
        <fullName>DNA-directed RNA polymerase 35 kDa subunit</fullName>
        <ecNumber>2.7.7.6</ecNumber>
    </recommendedName>
</protein>
<dbReference type="EC" id="2.7.7.6"/>
<dbReference type="EMBL" id="AY484669">
    <property type="protein sequence ID" value="AAS49850.1"/>
    <property type="molecule type" value="Genomic_DNA"/>
</dbReference>
<dbReference type="SMR" id="Q6RZF4"/>
<dbReference type="Proteomes" id="UP000166173">
    <property type="component" value="Segment"/>
</dbReference>
<dbReference type="GO" id="GO:0000428">
    <property type="term" value="C:DNA-directed RNA polymerase complex"/>
    <property type="evidence" value="ECO:0007669"/>
    <property type="project" value="UniProtKB-KW"/>
</dbReference>
<dbReference type="GO" id="GO:0044423">
    <property type="term" value="C:virion component"/>
    <property type="evidence" value="ECO:0007669"/>
    <property type="project" value="UniProtKB-KW"/>
</dbReference>
<dbReference type="GO" id="GO:0003677">
    <property type="term" value="F:DNA binding"/>
    <property type="evidence" value="ECO:0007669"/>
    <property type="project" value="InterPro"/>
</dbReference>
<dbReference type="GO" id="GO:0003899">
    <property type="term" value="F:DNA-directed RNA polymerase activity"/>
    <property type="evidence" value="ECO:0007669"/>
    <property type="project" value="UniProtKB-EC"/>
</dbReference>
<dbReference type="GO" id="GO:0019083">
    <property type="term" value="P:viral transcription"/>
    <property type="evidence" value="ECO:0007669"/>
    <property type="project" value="InterPro"/>
</dbReference>
<dbReference type="InterPro" id="IPR005059">
    <property type="entry name" value="DNA-dir_RNA_pol_35kDa_poxviral"/>
</dbReference>
<dbReference type="Pfam" id="PF03396">
    <property type="entry name" value="Pox_RNA_pol_35"/>
    <property type="match status" value="1"/>
</dbReference>
<dbReference type="PIRSF" id="PIRSF000746">
    <property type="entry name" value="Rpo35"/>
    <property type="match status" value="1"/>
</dbReference>
<organism>
    <name type="scientific">Rabbitpox virus (strain Utrecht)</name>
    <name type="common">RPV</name>
    <dbReference type="NCBI Taxonomy" id="45417"/>
    <lineage>
        <taxon>Viruses</taxon>
        <taxon>Varidnaviria</taxon>
        <taxon>Bamfordvirae</taxon>
        <taxon>Nucleocytoviricota</taxon>
        <taxon>Pokkesviricetes</taxon>
        <taxon>Chitovirales</taxon>
        <taxon>Poxviridae</taxon>
        <taxon>Chordopoxvirinae</taxon>
        <taxon>Orthopoxvirus</taxon>
        <taxon>Vaccinia virus</taxon>
    </lineage>
</organism>
<keyword id="KW-0240">DNA-directed RNA polymerase</keyword>
<keyword id="KW-0548">Nucleotidyltransferase</keyword>
<keyword id="KW-0804">Transcription</keyword>
<keyword id="KW-0808">Transferase</keyword>
<keyword id="KW-0946">Virion</keyword>
<name>RP35_RABPU</name>
<comment type="function">
    <text evidence="1">Part of the DNA-dependent RNA polymerase which catalyzes the transcription of viral DNA into RNA using the four ribonucleoside triphosphates as substrates. Responsible for the transcription of early, intermediate and late genes. DNA-dependent RNA polymerase associates with the early transcription factor (ETF) thereby allowing the early genes transcription. Late transcription, and probably also intermediate transcription, require newly synthesized RNA polymerase (By similarity).</text>
</comment>
<comment type="catalytic activity">
    <reaction>
        <text>RNA(n) + a ribonucleoside 5'-triphosphate = RNA(n+1) + diphosphate</text>
        <dbReference type="Rhea" id="RHEA:21248"/>
        <dbReference type="Rhea" id="RHEA-COMP:14527"/>
        <dbReference type="Rhea" id="RHEA-COMP:17342"/>
        <dbReference type="ChEBI" id="CHEBI:33019"/>
        <dbReference type="ChEBI" id="CHEBI:61557"/>
        <dbReference type="ChEBI" id="CHEBI:140395"/>
        <dbReference type="EC" id="2.7.7.6"/>
    </reaction>
</comment>
<comment type="subunit">
    <text evidence="1">The DNA-dependent RNA polymerase used for intermediate and late genes expression consists of eight subunits 147 kDa, 133 kDa, 35 kDa, 30 kDa, 22 kDa, 19 kDa, 18 kDa and 7 kDa totalling more than 500 kDa in mass. The same holoenzyme, with the addition of the transcription-specificity factor RAP94, is used for early gene expression (By similarity).</text>
</comment>
<comment type="subcellular location">
    <subcellularLocation>
        <location evidence="2">Virion</location>
    </subcellularLocation>
    <text evidence="1">All the enzymes and other proteins required to synthesize early mRNAs are packaged within the virion core along with the DNA genome. This is necessary because viral early mRNAs are synthesized within minutes after virus entry into the cell and are extruded through pores in the core particle (By similarity).</text>
</comment>
<comment type="similarity">
    <text evidence="2">Belongs to the poxviridae DNA-directed RNA polymerase 35 kDa subunit family.</text>
</comment>
<evidence type="ECO:0000250" key="1"/>
<evidence type="ECO:0000305" key="2"/>
<gene>
    <name type="primary">RPO35</name>
    <name type="ordered locus">RPXV137</name>
</gene>
<proteinExistence type="inferred from homology"/>
<organismHost>
    <name type="scientific">Oryctolagus cuniculus</name>
    <name type="common">Rabbit</name>
    <dbReference type="NCBI Taxonomy" id="9986"/>
</organismHost>